<evidence type="ECO:0000250" key="1">
    <source>
        <dbReference type="UniProtKB" id="Q8C669"/>
    </source>
</evidence>
<evidence type="ECO:0000250" key="2">
    <source>
        <dbReference type="UniProtKB" id="Q9HAT8"/>
    </source>
</evidence>
<evidence type="ECO:0000269" key="3">
    <source>
    </source>
</evidence>
<evidence type="ECO:0000269" key="4">
    <source>
    </source>
</evidence>
<evidence type="ECO:0000269" key="5">
    <source>
    </source>
</evidence>
<evidence type="ECO:0000269" key="6">
    <source>
    </source>
</evidence>
<evidence type="ECO:0000269" key="7">
    <source>
    </source>
</evidence>
<evidence type="ECO:0000269" key="8">
    <source>
    </source>
</evidence>
<evidence type="ECO:0000269" key="9">
    <source>
    </source>
</evidence>
<evidence type="ECO:0000269" key="10">
    <source>
    </source>
</evidence>
<evidence type="ECO:0000269" key="11">
    <source>
    </source>
</evidence>
<evidence type="ECO:0000269" key="12">
    <source>
    </source>
</evidence>
<evidence type="ECO:0000303" key="13">
    <source>
    </source>
</evidence>
<evidence type="ECO:0000305" key="14"/>
<dbReference type="EC" id="2.3.2.27" evidence="9 10 11 12"/>
<dbReference type="EMBL" id="AJ278859">
    <property type="protein sequence ID" value="CAC04320.1"/>
    <property type="molecule type" value="mRNA"/>
</dbReference>
<dbReference type="EMBL" id="AF302505">
    <property type="protein sequence ID" value="AAG15393.1"/>
    <property type="molecule type" value="mRNA"/>
</dbReference>
<dbReference type="EMBL" id="AF300987">
    <property type="protein sequence ID" value="AAG17451.1"/>
    <property type="molecule type" value="mRNA"/>
</dbReference>
<dbReference type="EMBL" id="BC011419">
    <property type="protein sequence ID" value="AAH11419.1"/>
    <property type="status" value="ALT_INIT"/>
    <property type="molecule type" value="mRNA"/>
</dbReference>
<dbReference type="EMBL" id="BC050019">
    <property type="protein sequence ID" value="AAH50019.1"/>
    <property type="molecule type" value="mRNA"/>
</dbReference>
<dbReference type="EMBL" id="BC063611">
    <property type="protein sequence ID" value="AAH63611.1"/>
    <property type="molecule type" value="mRNA"/>
</dbReference>
<dbReference type="EMBL" id="AK027668">
    <property type="protein sequence ID" value="BAB55280.1"/>
    <property type="status" value="ALT_INIT"/>
    <property type="molecule type" value="mRNA"/>
</dbReference>
<dbReference type="CCDS" id="CCDS1876.1"/>
<dbReference type="RefSeq" id="NP_065702.2">
    <property type="nucleotide sequence ID" value="NM_020651.3"/>
</dbReference>
<dbReference type="RefSeq" id="XP_011531296.1">
    <property type="nucleotide sequence ID" value="XM_011532994.4"/>
</dbReference>
<dbReference type="RefSeq" id="XP_016860009.1">
    <property type="nucleotide sequence ID" value="XM_017004520.2"/>
</dbReference>
<dbReference type="RefSeq" id="XP_047301093.1">
    <property type="nucleotide sequence ID" value="XM_047445137.1"/>
</dbReference>
<dbReference type="RefSeq" id="XP_047301095.1">
    <property type="nucleotide sequence ID" value="XM_047445139.1"/>
</dbReference>
<dbReference type="RefSeq" id="XP_054199049.1">
    <property type="nucleotide sequence ID" value="XM_054343074.1"/>
</dbReference>
<dbReference type="RefSeq" id="XP_054199050.1">
    <property type="nucleotide sequence ID" value="XM_054343075.1"/>
</dbReference>
<dbReference type="RefSeq" id="XP_054199051.1">
    <property type="nucleotide sequence ID" value="XM_054343076.1"/>
</dbReference>
<dbReference type="RefSeq" id="XP_054199052.1">
    <property type="nucleotide sequence ID" value="XM_054343077.1"/>
</dbReference>
<dbReference type="PDB" id="9IF9">
    <property type="method" value="X-ray"/>
    <property type="resolution" value="2.55 A"/>
    <property type="chains" value="A/B=13-263"/>
</dbReference>
<dbReference type="PDBsum" id="9IF9"/>
<dbReference type="SMR" id="Q96FA3"/>
<dbReference type="BioGRID" id="121418">
    <property type="interactions" value="68"/>
</dbReference>
<dbReference type="CORUM" id="Q96FA3"/>
<dbReference type="DIP" id="DIP-32488N"/>
<dbReference type="FunCoup" id="Q96FA3">
    <property type="interactions" value="1772"/>
</dbReference>
<dbReference type="IntAct" id="Q96FA3">
    <property type="interactions" value="28"/>
</dbReference>
<dbReference type="MINT" id="Q96FA3"/>
<dbReference type="STRING" id="9606.ENSP00000351789"/>
<dbReference type="iPTMnet" id="Q96FA3"/>
<dbReference type="PhosphoSitePlus" id="Q96FA3"/>
<dbReference type="BioMuta" id="PELI1"/>
<dbReference type="DMDM" id="37999756"/>
<dbReference type="jPOST" id="Q96FA3"/>
<dbReference type="MassIVE" id="Q96FA3"/>
<dbReference type="PaxDb" id="9606-ENSP00000351789"/>
<dbReference type="PeptideAtlas" id="Q96FA3"/>
<dbReference type="ProteomicsDB" id="76505"/>
<dbReference type="Pumba" id="Q96FA3"/>
<dbReference type="Antibodypedia" id="16046">
    <property type="antibodies" value="239 antibodies from 29 providers"/>
</dbReference>
<dbReference type="DNASU" id="57162"/>
<dbReference type="Ensembl" id="ENST00000358912.5">
    <property type="protein sequence ID" value="ENSP00000351789.4"/>
    <property type="gene ID" value="ENSG00000197329.12"/>
</dbReference>
<dbReference type="GeneID" id="57162"/>
<dbReference type="KEGG" id="hsa:57162"/>
<dbReference type="MANE-Select" id="ENST00000358912.5">
    <property type="protein sequence ID" value="ENSP00000351789.4"/>
    <property type="RefSeq nucleotide sequence ID" value="NM_020651.4"/>
    <property type="RefSeq protein sequence ID" value="NP_065702.2"/>
</dbReference>
<dbReference type="UCSC" id="uc002sct.5">
    <property type="organism name" value="human"/>
</dbReference>
<dbReference type="AGR" id="HGNC:8827"/>
<dbReference type="CTD" id="57162"/>
<dbReference type="DisGeNET" id="57162"/>
<dbReference type="GeneCards" id="PELI1"/>
<dbReference type="HGNC" id="HGNC:8827">
    <property type="gene designation" value="PELI1"/>
</dbReference>
<dbReference type="HPA" id="ENSG00000197329">
    <property type="expression patterns" value="Tissue enriched (bone)"/>
</dbReference>
<dbReference type="MIM" id="614797">
    <property type="type" value="gene"/>
</dbReference>
<dbReference type="neXtProt" id="NX_Q96FA3"/>
<dbReference type="OpenTargets" id="ENSG00000197329"/>
<dbReference type="PharmGKB" id="PA33172"/>
<dbReference type="VEuPathDB" id="HostDB:ENSG00000197329"/>
<dbReference type="eggNOG" id="KOG3842">
    <property type="taxonomic scope" value="Eukaryota"/>
</dbReference>
<dbReference type="GeneTree" id="ENSGT00950000183050"/>
<dbReference type="HOGENOM" id="CLU_029221_2_0_1"/>
<dbReference type="InParanoid" id="Q96FA3"/>
<dbReference type="OMA" id="QIGRMPC"/>
<dbReference type="OrthoDB" id="8801906at2759"/>
<dbReference type="PAN-GO" id="Q96FA3">
    <property type="GO annotations" value="2 GO annotations based on evolutionary models"/>
</dbReference>
<dbReference type="PhylomeDB" id="Q96FA3"/>
<dbReference type="TreeFam" id="TF314338"/>
<dbReference type="PathwayCommons" id="Q96FA3"/>
<dbReference type="Reactome" id="R-HSA-5675482">
    <property type="pathway name" value="Regulation of necroptotic cell death"/>
</dbReference>
<dbReference type="Reactome" id="R-HSA-9020702">
    <property type="pathway name" value="Interleukin-1 signaling"/>
</dbReference>
<dbReference type="Reactome" id="R-HSA-937039">
    <property type="pathway name" value="IRAK1 recruits IKK complex"/>
</dbReference>
<dbReference type="Reactome" id="R-HSA-975144">
    <property type="pathway name" value="IRAK1 recruits IKK complex upon TLR7/8 or 9 stimulation"/>
</dbReference>
<dbReference type="SignaLink" id="Q96FA3"/>
<dbReference type="SIGNOR" id="Q96FA3"/>
<dbReference type="UniPathway" id="UPA00143"/>
<dbReference type="BioGRID-ORCS" id="57162">
    <property type="hits" value="10 hits in 1198 CRISPR screens"/>
</dbReference>
<dbReference type="ChiTaRS" id="PELI1">
    <property type="organism name" value="human"/>
</dbReference>
<dbReference type="GeneWiki" id="PELI1"/>
<dbReference type="GenomeRNAi" id="57162"/>
<dbReference type="Pharos" id="Q96FA3">
    <property type="development level" value="Tbio"/>
</dbReference>
<dbReference type="PRO" id="PR:Q96FA3"/>
<dbReference type="Proteomes" id="UP000005640">
    <property type="component" value="Chromosome 2"/>
</dbReference>
<dbReference type="RNAct" id="Q96FA3">
    <property type="molecule type" value="protein"/>
</dbReference>
<dbReference type="Bgee" id="ENSG00000197329">
    <property type="expression patterns" value="Expressed in mucosa of paranasal sinus and 205 other cell types or tissues"/>
</dbReference>
<dbReference type="ExpressionAtlas" id="Q96FA3">
    <property type="expression patterns" value="baseline and differential"/>
</dbReference>
<dbReference type="GO" id="GO:0005737">
    <property type="term" value="C:cytoplasm"/>
    <property type="evidence" value="ECO:0000305"/>
    <property type="project" value="UniProt"/>
</dbReference>
<dbReference type="GO" id="GO:0005829">
    <property type="term" value="C:cytosol"/>
    <property type="evidence" value="ECO:0000304"/>
    <property type="project" value="Reactome"/>
</dbReference>
<dbReference type="GO" id="GO:0005634">
    <property type="term" value="C:nucleus"/>
    <property type="evidence" value="ECO:0007669"/>
    <property type="project" value="Ensembl"/>
</dbReference>
<dbReference type="GO" id="GO:0035861">
    <property type="term" value="C:site of double-strand break"/>
    <property type="evidence" value="ECO:0000314"/>
    <property type="project" value="UniProtKB"/>
</dbReference>
<dbReference type="GO" id="GO:0061630">
    <property type="term" value="F:ubiquitin protein ligase activity"/>
    <property type="evidence" value="ECO:0000314"/>
    <property type="project" value="UniProtKB"/>
</dbReference>
<dbReference type="GO" id="GO:0034450">
    <property type="term" value="F:ubiquitin-ubiquitin ligase activity"/>
    <property type="evidence" value="ECO:0000314"/>
    <property type="project" value="UniProtKB"/>
</dbReference>
<dbReference type="GO" id="GO:0006281">
    <property type="term" value="P:DNA repair"/>
    <property type="evidence" value="ECO:0007669"/>
    <property type="project" value="UniProtKB-KW"/>
</dbReference>
<dbReference type="GO" id="GO:0060546">
    <property type="term" value="P:negative regulation of necroptotic process"/>
    <property type="evidence" value="ECO:0000315"/>
    <property type="project" value="UniProtKB"/>
</dbReference>
<dbReference type="GO" id="GO:0042130">
    <property type="term" value="P:negative regulation of T cell proliferation"/>
    <property type="evidence" value="ECO:0007669"/>
    <property type="project" value="Ensembl"/>
</dbReference>
<dbReference type="GO" id="GO:1904262">
    <property type="term" value="P:negative regulation of TORC1 signaling"/>
    <property type="evidence" value="ECO:0000314"/>
    <property type="project" value="UniProt"/>
</dbReference>
<dbReference type="GO" id="GO:0030890">
    <property type="term" value="P:positive regulation of B cell proliferation"/>
    <property type="evidence" value="ECO:0007669"/>
    <property type="project" value="Ensembl"/>
</dbReference>
<dbReference type="GO" id="GO:0043123">
    <property type="term" value="P:positive regulation of canonical NF-kappaB signal transduction"/>
    <property type="evidence" value="ECO:0000304"/>
    <property type="project" value="Reactome"/>
</dbReference>
<dbReference type="GO" id="GO:0001819">
    <property type="term" value="P:positive regulation of cytokine production"/>
    <property type="evidence" value="ECO:0007669"/>
    <property type="project" value="Ensembl"/>
</dbReference>
<dbReference type="GO" id="GO:1905168">
    <property type="term" value="P:positive regulation of double-strand break repair via homologous recombination"/>
    <property type="evidence" value="ECO:0000314"/>
    <property type="project" value="UniProtKB"/>
</dbReference>
<dbReference type="GO" id="GO:0031398">
    <property type="term" value="P:positive regulation of protein ubiquitination"/>
    <property type="evidence" value="ECO:0007669"/>
    <property type="project" value="Ensembl"/>
</dbReference>
<dbReference type="GO" id="GO:0034141">
    <property type="term" value="P:positive regulation of toll-like receptor 3 signaling pathway"/>
    <property type="evidence" value="ECO:0007669"/>
    <property type="project" value="Ensembl"/>
</dbReference>
<dbReference type="GO" id="GO:0034145">
    <property type="term" value="P:positive regulation of toll-like receptor 4 signaling pathway"/>
    <property type="evidence" value="ECO:0007669"/>
    <property type="project" value="Ensembl"/>
</dbReference>
<dbReference type="GO" id="GO:0043161">
    <property type="term" value="P:proteasome-mediated ubiquitin-dependent protein catabolic process"/>
    <property type="evidence" value="ECO:0000315"/>
    <property type="project" value="UniProtKB"/>
</dbReference>
<dbReference type="GO" id="GO:0070936">
    <property type="term" value="P:protein K48-linked ubiquitination"/>
    <property type="evidence" value="ECO:0000315"/>
    <property type="project" value="UniProtKB"/>
</dbReference>
<dbReference type="GO" id="GO:0070534">
    <property type="term" value="P:protein K63-linked ubiquitination"/>
    <property type="evidence" value="ECO:0000314"/>
    <property type="project" value="UniProtKB"/>
</dbReference>
<dbReference type="GO" id="GO:0060544">
    <property type="term" value="P:regulation of necroptotic process"/>
    <property type="evidence" value="ECO:0000304"/>
    <property type="project" value="Reactome"/>
</dbReference>
<dbReference type="GO" id="GO:0008592">
    <property type="term" value="P:regulation of Toll signaling pathway"/>
    <property type="evidence" value="ECO:0007669"/>
    <property type="project" value="InterPro"/>
</dbReference>
<dbReference type="GO" id="GO:0043331">
    <property type="term" value="P:response to dsRNA"/>
    <property type="evidence" value="ECO:0007669"/>
    <property type="project" value="Ensembl"/>
</dbReference>
<dbReference type="GO" id="GO:0032496">
    <property type="term" value="P:response to lipopolysaccharide"/>
    <property type="evidence" value="ECO:0000314"/>
    <property type="project" value="ARUK-UCL"/>
</dbReference>
<dbReference type="GO" id="GO:0042098">
    <property type="term" value="P:T cell proliferation"/>
    <property type="evidence" value="ECO:0007669"/>
    <property type="project" value="Ensembl"/>
</dbReference>
<dbReference type="InterPro" id="IPR006800">
    <property type="entry name" value="Pellino_fam"/>
</dbReference>
<dbReference type="InterPro" id="IPR048334">
    <property type="entry name" value="Pellino_FHA"/>
</dbReference>
<dbReference type="InterPro" id="IPR048335">
    <property type="entry name" value="Pellino_RING"/>
</dbReference>
<dbReference type="PANTHER" id="PTHR12098:SF4">
    <property type="entry name" value="E3 UBIQUITIN-PROTEIN LIGASE PELLINO HOMOLOG 1"/>
    <property type="match status" value="1"/>
</dbReference>
<dbReference type="PANTHER" id="PTHR12098">
    <property type="entry name" value="E3 UBIQUITIN-PROTEIN LIGASE PELLINO-RELATED"/>
    <property type="match status" value="1"/>
</dbReference>
<dbReference type="Pfam" id="PF04710">
    <property type="entry name" value="Pellino_FHA"/>
    <property type="match status" value="1"/>
</dbReference>
<dbReference type="Pfam" id="PF20723">
    <property type="entry name" value="Pellino_RING"/>
    <property type="match status" value="1"/>
</dbReference>
<dbReference type="PIRSF" id="PIRSF038886">
    <property type="entry name" value="Pellino"/>
    <property type="match status" value="1"/>
</dbReference>
<protein>
    <recommendedName>
        <fullName>E3 ubiquitin-protein ligase pellino homolog 1</fullName>
        <shortName>Pellino-1</shortName>
        <ecNumber evidence="9 10 11 12">2.3.2.27</ecNumber>
    </recommendedName>
    <alternativeName>
        <fullName>Pellino-related intracellular-signaling molecule</fullName>
    </alternativeName>
    <alternativeName>
        <fullName evidence="14">RING-type E3 ubiquitin transferase pellino homolog 1</fullName>
    </alternativeName>
</protein>
<accession>Q96FA3</accession>
<accession>Q96SM0</accession>
<accession>Q9GZY5</accession>
<accession>Q9HCX0</accession>
<proteinExistence type="evidence at protein level"/>
<keyword id="KW-0002">3D-structure</keyword>
<keyword id="KW-0158">Chromosome</keyword>
<keyword id="KW-0227">DNA damage</keyword>
<keyword id="KW-0234">DNA repair</keyword>
<keyword id="KW-0597">Phosphoprotein</keyword>
<keyword id="KW-1267">Proteomics identification</keyword>
<keyword id="KW-1185">Reference proteome</keyword>
<keyword id="KW-0808">Transferase</keyword>
<keyword id="KW-0832">Ubl conjugation</keyword>
<keyword id="KW-0833">Ubl conjugation pathway</keyword>
<comment type="function">
    <text evidence="1 3 6 9 10 11">E3 ubiquitin ligase catalyzing the covalent attachment of ubiquitin moieties onto substrate proteins (PubMed:12496252, PubMed:17675297, PubMed:29883609, PubMed:30952868). Involved in the TLR and IL-1 signaling pathways via interaction with the complex containing IRAK kinases and TRAF6 (PubMed:12496252, PubMed:17675297). Acts as a positive regulator of inflammatory response in microglia through activation of NF-kappa-B and MAP kinase (By similarity). Mediates 'Lys-63'-linked polyubiquitination of IRAK1 allowing subsequent NF-kappa-B activation (PubMed:12496252, PubMed:17675297). Conjugates 'Lys-63'-linked ubiquitin chains to the adapter protein ASC/PYCARD, which in turn is crucial for NLRP3 inflammasome activation (PubMed:34706239). Mediates 'Lys-48'-linked polyubiquitination of RIPK3 leading to its subsequent proteasome-dependent degradation; preferentially recognizes and mediates the degradation of the 'Thr-182' phosphorylated form of RIPK3 (PubMed:29883609). Negatively regulates necroptosis by reducing RIPK3 expression (PubMed:29883609). Mediates 'Lys-63'-linked ubiquitination of RIPK1 (PubMed:29883609). Following phosphorylation by ATM, catalyzes 'Lys-63'-linked ubiquitination of NBN, promoting DNA repair via homologous recombination (PubMed:30952868). Negatively regulates activation of the metabolic mTORC1 signaling pathway by mediating 'Lys-63'-linked ubiquitination of mTORC1-inhibitory protein TSC1 and thereby promoting TSC1/TSC2 complex stability (PubMed:33215753).</text>
</comment>
<comment type="catalytic activity">
    <reaction evidence="9 10 11 12">
        <text>S-ubiquitinyl-[E2 ubiquitin-conjugating enzyme]-L-cysteine + [acceptor protein]-L-lysine = [E2 ubiquitin-conjugating enzyme]-L-cysteine + N(6)-ubiquitinyl-[acceptor protein]-L-lysine.</text>
        <dbReference type="EC" id="2.3.2.27"/>
    </reaction>
</comment>
<comment type="pathway">
    <text evidence="10">Protein modification; protein ubiquitination.</text>
</comment>
<comment type="subunit">
    <text evidence="3 4 5 9">Interacts with MAP3K7. Upon IL1B treatment, forms a complex with TRAF6, IRAK1, IRAK4 and MYD88; this complex recruits MAP3K7/TAK1, TAB1 and TAB2 to mediate NF-kappa-B activation. Direct binding of SMAD6 to PELI1 prevents the complex formation and hence negatively regulates IL1R-TLR signaling and eventually NF-kappa-B-mediated gene expression (PubMed:12496252, PubMed:12804775, PubMed:16951688). Interacts (via atypical FHA domain) with RIPK3; preferentially binds to the 'Thr-182' phosphorylated form of RIPK3 (PubMed:29883609). Interacts with RIPK1 and IRAK1 (PubMed:29883609).</text>
</comment>
<comment type="interaction">
    <interactant intactId="EBI-448369">
        <id>Q96FA3</id>
    </interactant>
    <interactant intactId="EBI-11977093">
        <id>Q6ZS10</id>
        <label>CLEC17A</label>
    </interactant>
    <organismsDiffer>false</organismsDiffer>
    <experiments>3</experiments>
</comment>
<comment type="interaction">
    <interactant intactId="EBI-448369">
        <id>Q96FA3</id>
    </interactant>
    <interactant intactId="EBI-947360">
        <id>Q8N137</id>
        <label>CNTROB</label>
    </interactant>
    <organismsDiffer>false</organismsDiffer>
    <experiments>3</experiments>
</comment>
<comment type="interaction">
    <interactant intactId="EBI-448369">
        <id>Q96FA3</id>
    </interactant>
    <interactant intactId="EBI-4401517">
        <id>O14653</id>
        <label>GOSR2</label>
    </interactant>
    <organismsDiffer>false</organismsDiffer>
    <experiments>3</experiments>
</comment>
<comment type="interaction">
    <interactant intactId="EBI-448369">
        <id>Q96FA3</id>
    </interactant>
    <interactant intactId="EBI-466029">
        <id>P42858</id>
        <label>HTT</label>
    </interactant>
    <organismsDiffer>false</organismsDiffer>
    <experiments>3</experiments>
</comment>
<comment type="interaction">
    <interactant intactId="EBI-448369">
        <id>Q96FA3</id>
    </interactant>
    <interactant intactId="EBI-10236940">
        <id>Q15735</id>
        <label>INPP5J</label>
    </interactant>
    <organismsDiffer>false</organismsDiffer>
    <experiments>3</experiments>
</comment>
<comment type="interaction">
    <interactant intactId="EBI-448369">
        <id>Q96FA3</id>
    </interactant>
    <interactant intactId="EBI-358664">
        <id>P51617</id>
        <label>IRAK1</label>
    </interactant>
    <organismsDiffer>false</organismsDiffer>
    <experiments>4</experiments>
</comment>
<comment type="interaction">
    <interactant intactId="EBI-448369">
        <id>Q96FA3</id>
    </interactant>
    <interactant intactId="EBI-448378">
        <id>Q9NWZ3</id>
        <label>IRAK4</label>
    </interactant>
    <organismsDiffer>false</organismsDiffer>
    <experiments>6</experiments>
</comment>
<comment type="interaction">
    <interactant intactId="EBI-448369">
        <id>Q96FA3</id>
    </interactant>
    <interactant intactId="EBI-11911016">
        <id>P80188</id>
        <label>LCN2</label>
    </interactant>
    <organismsDiffer>false</organismsDiffer>
    <experiments>3</experiments>
</comment>
<comment type="interaction">
    <interactant intactId="EBI-448369">
        <id>Q96FA3</id>
    </interactant>
    <interactant intactId="EBI-351935">
        <id>P02545</id>
        <label>LMNA</label>
    </interactant>
    <organismsDiffer>false</organismsDiffer>
    <experiments>3</experiments>
</comment>
<comment type="interaction">
    <interactant intactId="EBI-448369">
        <id>Q96FA3</id>
    </interactant>
    <interactant intactId="EBI-1390763">
        <id>Q13442</id>
        <label>PDAP1</label>
    </interactant>
    <organismsDiffer>false</organismsDiffer>
    <experiments>3</experiments>
</comment>
<comment type="interaction">
    <interactant intactId="EBI-448369">
        <id>Q96FA3</id>
    </interactant>
    <interactant intactId="EBI-50433196">
        <id>A0A6Q8PF08</id>
        <label>PMP22</label>
    </interactant>
    <organismsDiffer>false</organismsDiffer>
    <experiments>3</experiments>
</comment>
<comment type="interaction">
    <interactant intactId="EBI-448369">
        <id>Q96FA3</id>
    </interactant>
    <interactant intactId="EBI-6660974">
        <id>Q9H426</id>
        <label>RIMS4</label>
    </interactant>
    <organismsDiffer>false</organismsDiffer>
    <experiments>3</experiments>
</comment>
<comment type="interaction">
    <interactant intactId="EBI-448369">
        <id>Q96FA3</id>
    </interactant>
    <interactant intactId="EBI-2337775">
        <id>Q9H3D4</id>
        <label>TP63</label>
    </interactant>
    <organismsDiffer>false</organismsDiffer>
    <experiments>3</experiments>
</comment>
<comment type="interaction">
    <interactant intactId="EBI-448369">
        <id>Q96FA3</id>
    </interactant>
    <interactant intactId="EBI-358993">
        <id>Q15645</id>
        <label>TRIP13</label>
    </interactant>
    <organismsDiffer>false</organismsDiffer>
    <experiments>3</experiments>
</comment>
<comment type="interaction">
    <interactant intactId="EBI-448369">
        <id>Q96FA3</id>
    </interactant>
    <interactant intactId="EBI-2107455">
        <id>Q08AM6</id>
        <label>VAC14</label>
    </interactant>
    <organismsDiffer>false</organismsDiffer>
    <experiments>3</experiments>
</comment>
<comment type="interaction">
    <interactant intactId="EBI-448369">
        <id>Q96FA3</id>
    </interactant>
    <interactant intactId="EBI-712969">
        <id>Q9Y3C0</id>
        <label>WASHC3</label>
    </interactant>
    <organismsDiffer>false</organismsDiffer>
    <experiments>3</experiments>
</comment>
<comment type="subcellular location">
    <subcellularLocation>
        <location evidence="7">Chromosome</location>
    </subcellularLocation>
    <text evidence="7">Localizes to DNA double-strand breaks (DSBs) in response to DNA damage.</text>
</comment>
<comment type="tissue specificity">
    <text evidence="9">Expressed at high levels in normal skin but decreased in keratinocytes from toxic epidermal necrolysis (TEN) patients (at protein level).</text>
</comment>
<comment type="PTM">
    <text evidence="7 10">Phosphorylation by IRAK1 and IRAK4 enhances its E3 ligase activity (PubMed:17997719). Phosphorylated by ATM in response to DNA damage, promoting localization to DNA double-strand breaks (DSBs) and ability to mediate 'Lys-63'-linked ubiquitination of NBN (PubMed:30952868).</text>
</comment>
<comment type="PTM">
    <text evidence="8">Sumoylated.</text>
</comment>
<comment type="similarity">
    <text evidence="14">Belongs to the pellino family.</text>
</comment>
<comment type="sequence caution" evidence="14">
    <conflict type="erroneous initiation">
        <sequence resource="EMBL-CDS" id="AAH11419"/>
    </conflict>
    <text>Truncated N-terminus.</text>
</comment>
<comment type="sequence caution" evidence="14">
    <conflict type="erroneous initiation">
        <sequence resource="EMBL-CDS" id="BAB55280"/>
    </conflict>
    <text>Truncated N-terminus.</text>
</comment>
<organism>
    <name type="scientific">Homo sapiens</name>
    <name type="common">Human</name>
    <dbReference type="NCBI Taxonomy" id="9606"/>
    <lineage>
        <taxon>Eukaryota</taxon>
        <taxon>Metazoa</taxon>
        <taxon>Chordata</taxon>
        <taxon>Craniata</taxon>
        <taxon>Vertebrata</taxon>
        <taxon>Euteleostomi</taxon>
        <taxon>Mammalia</taxon>
        <taxon>Eutheria</taxon>
        <taxon>Euarchontoglires</taxon>
        <taxon>Primates</taxon>
        <taxon>Haplorrhini</taxon>
        <taxon>Catarrhini</taxon>
        <taxon>Hominidae</taxon>
        <taxon>Homo</taxon>
    </lineage>
</organism>
<sequence>MFSPDQENHPSKAPVKYGELIVLGYNGSLPNGDRGRRKSRFALFKRPKANGVKPSTVHIACTPQAAKAISNKDQHSISYTLSRAQTVVVEYTHDSNTDMFQIGRSTESPIDFVVTDTVPGSQSNSDTQSVQSTISRFACRIICERNPPFTARIYAAGFDSSKNIFLGEKAAKWKTSDGQMDGLTTNGVLVMHPRNGFTEDSKPGIWREISVCGNVFSLRETRSAQQRGKMVEIETNQLQDGSLIDLCGATLLWRTAEGLSHTPTVKHLEALRQEINAARPQCPVGFNTLAFPSMKRKDVVDEKQPWVYLNCGHVHGYHNWGNKEERDGKDRECPMCRSVGPYVPLWLGCEAGFYVDAGPPTHAFSPCGHVCSEKTTAYWSQIPLPHGTHTFHAACPFCAHQLAGEQGYIRLIFQGPLD</sequence>
<reference key="1">
    <citation type="journal article" date="2000" name="Immunogenetics">
        <title>Pellino-related sequences from Caenorhabditis elegans and Homo sapiens.</title>
        <authorList>
            <person name="Rich T."/>
            <person name="Allen R.L."/>
            <person name="Lucas A.-M."/>
            <person name="Trowsdale J."/>
        </authorList>
    </citation>
    <scope>NUCLEOTIDE SEQUENCE [MRNA]</scope>
    <source>
        <tissue>Thymus</tissue>
    </source>
</reference>
<reference key="2">
    <citation type="journal article" date="2001" name="Cytogenet. Cell Genet.">
        <title>Assignment of homologous genes, Peli1/PELI1 and Peli2/PELI2, for the Pelle adaptor protein Pellino to mouse chromosomes 11 and 14 and human chromosomes 2p13.3 and 14q21, respectively, by physical and radiation hybrid mapping.</title>
        <authorList>
            <person name="Resch K."/>
            <person name="Jockusch H."/>
            <person name="Schmitt-John T."/>
        </authorList>
    </citation>
    <scope>NUCLEOTIDE SEQUENCE [MRNA]</scope>
</reference>
<reference key="3">
    <citation type="submission" date="2000-08" db="EMBL/GenBank/DDBJ databases">
        <title>PRISM, a novel mediator of Toll/IL-1 signalling.</title>
        <authorList>
            <person name="Kennedy E.J."/>
            <person name="Moynagh P.N."/>
        </authorList>
    </citation>
    <scope>NUCLEOTIDE SEQUENCE [MRNA]</scope>
</reference>
<reference key="4">
    <citation type="journal article" date="2004" name="Genome Res.">
        <title>The status, quality, and expansion of the NIH full-length cDNA project: the Mammalian Gene Collection (MGC).</title>
        <authorList>
            <consortium name="The MGC Project Team"/>
        </authorList>
    </citation>
    <scope>NUCLEOTIDE SEQUENCE [LARGE SCALE MRNA]</scope>
    <source>
        <tissue>Ovary</tissue>
        <tissue>Placenta</tissue>
        <tissue>Testis</tissue>
    </source>
</reference>
<reference key="5">
    <citation type="journal article" date="2004" name="Nat. Genet.">
        <title>Complete sequencing and characterization of 21,243 full-length human cDNAs.</title>
        <authorList>
            <person name="Ota T."/>
            <person name="Suzuki Y."/>
            <person name="Nishikawa T."/>
            <person name="Otsuki T."/>
            <person name="Sugiyama T."/>
            <person name="Irie R."/>
            <person name="Wakamatsu A."/>
            <person name="Hayashi K."/>
            <person name="Sato H."/>
            <person name="Nagai K."/>
            <person name="Kimura K."/>
            <person name="Makita H."/>
            <person name="Sekine M."/>
            <person name="Obayashi M."/>
            <person name="Nishi T."/>
            <person name="Shibahara T."/>
            <person name="Tanaka T."/>
            <person name="Ishii S."/>
            <person name="Yamamoto J."/>
            <person name="Saito K."/>
            <person name="Kawai Y."/>
            <person name="Isono Y."/>
            <person name="Nakamura Y."/>
            <person name="Nagahari K."/>
            <person name="Murakami K."/>
            <person name="Yasuda T."/>
            <person name="Iwayanagi T."/>
            <person name="Wagatsuma M."/>
            <person name="Shiratori A."/>
            <person name="Sudo H."/>
            <person name="Hosoiri T."/>
            <person name="Kaku Y."/>
            <person name="Kodaira H."/>
            <person name="Kondo H."/>
            <person name="Sugawara M."/>
            <person name="Takahashi M."/>
            <person name="Kanda K."/>
            <person name="Yokoi T."/>
            <person name="Furuya T."/>
            <person name="Kikkawa E."/>
            <person name="Omura Y."/>
            <person name="Abe K."/>
            <person name="Kamihara K."/>
            <person name="Katsuta N."/>
            <person name="Sato K."/>
            <person name="Tanikawa M."/>
            <person name="Yamazaki M."/>
            <person name="Ninomiya K."/>
            <person name="Ishibashi T."/>
            <person name="Yamashita H."/>
            <person name="Murakawa K."/>
            <person name="Fujimori K."/>
            <person name="Tanai H."/>
            <person name="Kimata M."/>
            <person name="Watanabe M."/>
            <person name="Hiraoka S."/>
            <person name="Chiba Y."/>
            <person name="Ishida S."/>
            <person name="Ono Y."/>
            <person name="Takiguchi S."/>
            <person name="Watanabe S."/>
            <person name="Yosida M."/>
            <person name="Hotuta T."/>
            <person name="Kusano J."/>
            <person name="Kanehori K."/>
            <person name="Takahashi-Fujii A."/>
            <person name="Hara H."/>
            <person name="Tanase T.-O."/>
            <person name="Nomura Y."/>
            <person name="Togiya S."/>
            <person name="Komai F."/>
            <person name="Hara R."/>
            <person name="Takeuchi K."/>
            <person name="Arita M."/>
            <person name="Imose N."/>
            <person name="Musashino K."/>
            <person name="Yuuki H."/>
            <person name="Oshima A."/>
            <person name="Sasaki N."/>
            <person name="Aotsuka S."/>
            <person name="Yoshikawa Y."/>
            <person name="Matsunawa H."/>
            <person name="Ichihara T."/>
            <person name="Shiohata N."/>
            <person name="Sano S."/>
            <person name="Moriya S."/>
            <person name="Momiyama H."/>
            <person name="Satoh N."/>
            <person name="Takami S."/>
            <person name="Terashima Y."/>
            <person name="Suzuki O."/>
            <person name="Nakagawa S."/>
            <person name="Senoh A."/>
            <person name="Mizoguchi H."/>
            <person name="Goto Y."/>
            <person name="Shimizu F."/>
            <person name="Wakebe H."/>
            <person name="Hishigaki H."/>
            <person name="Watanabe T."/>
            <person name="Sugiyama A."/>
            <person name="Takemoto M."/>
            <person name="Kawakami B."/>
            <person name="Yamazaki M."/>
            <person name="Watanabe K."/>
            <person name="Kumagai A."/>
            <person name="Itakura S."/>
            <person name="Fukuzumi Y."/>
            <person name="Fujimori Y."/>
            <person name="Komiyama M."/>
            <person name="Tashiro H."/>
            <person name="Tanigami A."/>
            <person name="Fujiwara T."/>
            <person name="Ono T."/>
            <person name="Yamada K."/>
            <person name="Fujii Y."/>
            <person name="Ozaki K."/>
            <person name="Hirao M."/>
            <person name="Ohmori Y."/>
            <person name="Kawabata A."/>
            <person name="Hikiji T."/>
            <person name="Kobatake N."/>
            <person name="Inagaki H."/>
            <person name="Ikema Y."/>
            <person name="Okamoto S."/>
            <person name="Okitani R."/>
            <person name="Kawakami T."/>
            <person name="Noguchi S."/>
            <person name="Itoh T."/>
            <person name="Shigeta K."/>
            <person name="Senba T."/>
            <person name="Matsumura K."/>
            <person name="Nakajima Y."/>
            <person name="Mizuno T."/>
            <person name="Morinaga M."/>
            <person name="Sasaki M."/>
            <person name="Togashi T."/>
            <person name="Oyama M."/>
            <person name="Hata H."/>
            <person name="Watanabe M."/>
            <person name="Komatsu T."/>
            <person name="Mizushima-Sugano J."/>
            <person name="Satoh T."/>
            <person name="Shirai Y."/>
            <person name="Takahashi Y."/>
            <person name="Nakagawa K."/>
            <person name="Okumura K."/>
            <person name="Nagase T."/>
            <person name="Nomura N."/>
            <person name="Kikuchi H."/>
            <person name="Masuho Y."/>
            <person name="Yamashita R."/>
            <person name="Nakai K."/>
            <person name="Yada T."/>
            <person name="Nakamura Y."/>
            <person name="Ohara O."/>
            <person name="Isogai T."/>
            <person name="Sugano S."/>
        </authorList>
    </citation>
    <scope>NUCLEOTIDE SEQUENCE [LARGE SCALE MRNA] OF 78-418</scope>
    <source>
        <tissue>Teratocarcinoma</tissue>
    </source>
</reference>
<reference key="6">
    <citation type="journal article" date="2003" name="J. Biol. Chem.">
        <title>Pellino 1 is required for interleukin-1 (IL-1)-mediated signaling through its interaction with the IL-1 receptor-associated kinase 4 (IRAK4)-IRAK-tumor necrosis factor receptor-associated factor 6 (TRAF6) complex.</title>
        <authorList>
            <person name="Jiang Z."/>
            <person name="Johnson H.J."/>
            <person name="Nie H."/>
            <person name="Qin J."/>
            <person name="Bird T.A."/>
            <person name="Li X."/>
        </authorList>
    </citation>
    <scope>FUNCTION</scope>
    <scope>INTERACTION WITH IRAK1; IRAK4 AND TRAF6</scope>
</reference>
<reference key="7">
    <citation type="journal article" date="2003" name="FEBS Lett.">
        <title>Pellino2 activates the mitogen activated protein kinase pathway.</title>
        <authorList>
            <person name="Jensen L.E."/>
            <person name="Whitehead A.S."/>
        </authorList>
    </citation>
    <scope>INTERACTION WITH TRAF6 AND MAP3K7</scope>
</reference>
<reference key="8">
    <citation type="journal article" date="2006" name="Nat. Immunol.">
        <title>Smad6 negatively regulates interleukin 1-receptor-Toll-like receptor signaling through direct interaction with the adapter Pellino-1.</title>
        <authorList>
            <person name="Choi K.C."/>
            <person name="Lee Y.S."/>
            <person name="Lim S."/>
            <person name="Choi H.K."/>
            <person name="Lee C.H."/>
            <person name="Lee E.K."/>
            <person name="Hong S."/>
            <person name="Kim I.H."/>
            <person name="Kim S.J."/>
            <person name="Park S.H."/>
        </authorList>
    </citation>
    <scope>INTERACTION WITH IRAK1; IRAK4; MYD88; SMAD6 AND TRAF6</scope>
</reference>
<reference key="9">
    <citation type="journal article" date="2007" name="J. Biol. Chem.">
        <title>Kinase-active interleukin-1 receptor-associated kinases promote polyubiquitination and degradation of the Pellino family: direct evidence for PELLINO proteins being ubiquitin-protein isopeptide ligases.</title>
        <authorList>
            <person name="Butler M.P."/>
            <person name="Hanly J.A."/>
            <person name="Moynagh P.N."/>
        </authorList>
    </citation>
    <scope>FUNCTION AS E3 UBIQUITIN LIGASE</scope>
</reference>
<reference key="10">
    <citation type="journal article" date="2008" name="Biochem. J.">
        <title>The IRAK-catalysed activation of the E3 ligase function of Pellino isoforms induces the Lys63-linked polyubiquitination of IRAK1.</title>
        <authorList>
            <person name="Ordureau A."/>
            <person name="Smith H."/>
            <person name="Windheim M."/>
            <person name="Peggie M."/>
            <person name="Carrick E."/>
            <person name="Morrice N."/>
            <person name="Cohen P."/>
        </authorList>
    </citation>
    <scope>PHOSPHORYLATION BY IRAK1 AND IRAK4</scope>
</reference>
<reference key="11">
    <citation type="journal article" date="2011" name="Mol. Cells">
        <title>Pellino-1, an adaptor protein of interleukin-1 receptor/toll-like receptor signaling, is sumoylated by Ubc9.</title>
        <authorList>
            <person name="Kim J.H."/>
            <person name="Sung K.S."/>
            <person name="Jung S.M."/>
            <person name="Lee Y.S."/>
            <person name="Kwon J.Y."/>
            <person name="Choi C.Y."/>
            <person name="Park S.H."/>
        </authorList>
    </citation>
    <scope>SUMOYLATION</scope>
</reference>
<reference key="12">
    <citation type="journal article" date="2018" name="Mol. Cell">
        <title>PELI1 selectively targets kinase-active RIP3 for ubiquitylation-dependent proteasomal degradation.</title>
        <authorList>
            <person name="Choi S.W."/>
            <person name="Park H.H."/>
            <person name="Kim S."/>
            <person name="Chung J.M."/>
            <person name="Noh H.J."/>
            <person name="Kim S.K."/>
            <person name="Song H.K."/>
            <person name="Lee C.W."/>
            <person name="Morgan M.J."/>
            <person name="Kang H.C."/>
            <person name="Kim Y.S."/>
        </authorList>
    </citation>
    <scope>FUNCTION</scope>
    <scope>CATALYTIC ACTIVITY</scope>
    <scope>INTERACTION WITH RIPK1; IRAK1 AND RIPK3</scope>
    <scope>MUTAGENESIS OF ARG-104; HIS-313 AND CYS-336</scope>
    <scope>REGION RING-LIKE DOMAIN</scope>
    <scope>TISSUE SPECIFICITY</scope>
</reference>
<reference key="13">
    <citation type="journal article" date="2019" name="Nat. Commun.">
        <title>Pellino1 regulates reversible ATM activation via NBS1 ubiquitination at DNA double-strand breaks.</title>
        <authorList>
            <person name="Ha G.H."/>
            <person name="Ji J.H."/>
            <person name="Chae S."/>
            <person name="Park J."/>
            <person name="Kim S."/>
            <person name="Lee J.K."/>
            <person name="Kim Y."/>
            <person name="Min S."/>
            <person name="Park J.M."/>
            <person name="Kang T.H."/>
            <person name="Lee H."/>
            <person name="Cho H."/>
            <person name="Lee C.W."/>
        </authorList>
    </citation>
    <scope>FUNCTION</scope>
    <scope>CATALYTIC ACTIVITY</scope>
    <scope>PATHWAY</scope>
    <scope>SUBCELLULAR LOCATION</scope>
    <scope>PHOSPHORYLATION AT SER-121 AND THR-127</scope>
    <scope>MUTAGENESIS OF SER-121; THR-127; HIS-313 AND CYS-336</scope>
</reference>
<reference key="14">
    <citation type="journal article" date="2021" name="EMBO J.">
        <title>The E3 ubiquitin ligase Peli1 regulates the metabolic actions of mTORC1 to suppress antitumor T cell responses.</title>
        <authorList>
            <person name="Ko C.J."/>
            <person name="Zhang L."/>
            <person name="Jie Z."/>
            <person name="Zhu L."/>
            <person name="Zhou X."/>
            <person name="Xie X."/>
            <person name="Gao T."/>
            <person name="Yang J.Y."/>
            <person name="Cheng X."/>
            <person name="Sun S.C."/>
        </authorList>
    </citation>
    <scope>FUNCTION</scope>
    <scope>CATALYTIC ACTIVITY</scope>
</reference>
<reference key="15">
    <citation type="journal article" date="2021" name="Cell Rep.">
        <title>Peli1 facilitates NLRP3 inflammasome activation by mediating ASC ubiquitination.</title>
        <authorList>
            <person name="Zhang L."/>
            <person name="Ko C.J."/>
            <person name="Li Y."/>
            <person name="Jie Z."/>
            <person name="Zhu L."/>
            <person name="Zhou X."/>
            <person name="Xie X."/>
            <person name="Gao T."/>
            <person name="Liu T."/>
            <person name="Cheng X."/>
            <person name="Sun S.C."/>
        </authorList>
    </citation>
    <scope>FUNCTION</scope>
    <scope>CATALYTIC ACTIVITY</scope>
</reference>
<name>PELI1_HUMAN</name>
<gene>
    <name evidence="13" type="primary">PELI1</name>
    <name type="synonym">PRISM</name>
</gene>
<feature type="chain" id="PRO_0000194172" description="E3 ubiquitin-protein ligase pellino homolog 1">
    <location>
        <begin position="1"/>
        <end position="418"/>
    </location>
</feature>
<feature type="domain" description="FHA; atypical" evidence="2">
    <location>
        <begin position="13"/>
        <end position="200"/>
    </location>
</feature>
<feature type="region of interest" description="Ring-like domain; necessary for ubiqitination of RIPK3" evidence="9">
    <location>
        <begin position="311"/>
        <end position="399"/>
    </location>
</feature>
<feature type="modified residue" description="Phosphoserine; by ATM" evidence="10">
    <location>
        <position position="121"/>
    </location>
</feature>
<feature type="modified residue" description="Phosphothreonine; by ATM" evidence="10">
    <location>
        <position position="127"/>
    </location>
</feature>
<feature type="mutagenesis site" description="Loss of ability to ubiquitinate RIPK3. Loss of interaction with RIPK1, IRAK1 and RIPK3." evidence="9">
    <original>R</original>
    <variation>A</variation>
    <location>
        <position position="104"/>
    </location>
</feature>
<feature type="mutagenesis site" description="Decreased phosphorylation by ATM in response to DNA damage; when associated with A-127." evidence="10">
    <original>S</original>
    <variation>A</variation>
    <location>
        <position position="121"/>
    </location>
</feature>
<feature type="mutagenesis site" description="Decreased phosphorylation by ATM in response to DNA damage; when associated with A-121." evidence="10">
    <original>T</original>
    <variation>A</variation>
    <location>
        <position position="127"/>
    </location>
</feature>
<feature type="mutagenesis site" description="Loss of ability to ubiquitinate RIPK3 and NBN. No loss of interaction with RIPK3." evidence="9 10">
    <original>H</original>
    <variation>A</variation>
    <location>
        <position position="313"/>
    </location>
</feature>
<feature type="mutagenesis site" description="Loss of ability to ubiquitinate RIPK3 and NBN. No loss of interaction with RIPK3." evidence="9 10">
    <original>C</original>
    <variation>A</variation>
    <location>
        <position position="336"/>
    </location>
</feature>
<feature type="sequence conflict" description="In Ref. 1; CAC04320." evidence="14" ref="1">
    <original>S</original>
    <variation>F</variation>
    <location>
        <position position="11"/>
    </location>
</feature>
<feature type="sequence conflict" description="In Ref. 5; BAB55280." evidence="14" ref="5">
    <original>F</original>
    <variation>S</variation>
    <location>
        <position position="100"/>
    </location>
</feature>
<feature type="sequence conflict" description="In Ref. 5; BAB55280." evidence="14" ref="5">
    <original>S</original>
    <variation>P</variation>
    <location>
        <position position="260"/>
    </location>
</feature>